<reference key="1">
    <citation type="journal article" date="1997" name="DNA Res.">
        <title>Identification of open reading frames in Schizosaccharomyces pombe cDNAs.</title>
        <authorList>
            <person name="Yoshioka S."/>
            <person name="Kato K."/>
            <person name="Nakai K."/>
            <person name="Okayama H."/>
            <person name="Nojima H."/>
        </authorList>
    </citation>
    <scope>NUCLEOTIDE SEQUENCE [LARGE SCALE MRNA]</scope>
    <source>
        <strain>PR745</strain>
    </source>
</reference>
<reference key="2">
    <citation type="journal article" date="2002" name="Nature">
        <title>The genome sequence of Schizosaccharomyces pombe.</title>
        <authorList>
            <person name="Wood V."/>
            <person name="Gwilliam R."/>
            <person name="Rajandream M.A."/>
            <person name="Lyne M.H."/>
            <person name="Lyne R."/>
            <person name="Stewart A."/>
            <person name="Sgouros J.G."/>
            <person name="Peat N."/>
            <person name="Hayles J."/>
            <person name="Baker S.G."/>
            <person name="Basham D."/>
            <person name="Bowman S."/>
            <person name="Brooks K."/>
            <person name="Brown D."/>
            <person name="Brown S."/>
            <person name="Chillingworth T."/>
            <person name="Churcher C.M."/>
            <person name="Collins M."/>
            <person name="Connor R."/>
            <person name="Cronin A."/>
            <person name="Davis P."/>
            <person name="Feltwell T."/>
            <person name="Fraser A."/>
            <person name="Gentles S."/>
            <person name="Goble A."/>
            <person name="Hamlin N."/>
            <person name="Harris D.E."/>
            <person name="Hidalgo J."/>
            <person name="Hodgson G."/>
            <person name="Holroyd S."/>
            <person name="Hornsby T."/>
            <person name="Howarth S."/>
            <person name="Huckle E.J."/>
            <person name="Hunt S."/>
            <person name="Jagels K."/>
            <person name="James K.D."/>
            <person name="Jones L."/>
            <person name="Jones M."/>
            <person name="Leather S."/>
            <person name="McDonald S."/>
            <person name="McLean J."/>
            <person name="Mooney P."/>
            <person name="Moule S."/>
            <person name="Mungall K.L."/>
            <person name="Murphy L.D."/>
            <person name="Niblett D."/>
            <person name="Odell C."/>
            <person name="Oliver K."/>
            <person name="O'Neil S."/>
            <person name="Pearson D."/>
            <person name="Quail M.A."/>
            <person name="Rabbinowitsch E."/>
            <person name="Rutherford K.M."/>
            <person name="Rutter S."/>
            <person name="Saunders D."/>
            <person name="Seeger K."/>
            <person name="Sharp S."/>
            <person name="Skelton J."/>
            <person name="Simmonds M.N."/>
            <person name="Squares R."/>
            <person name="Squares S."/>
            <person name="Stevens K."/>
            <person name="Taylor K."/>
            <person name="Taylor R.G."/>
            <person name="Tivey A."/>
            <person name="Walsh S.V."/>
            <person name="Warren T."/>
            <person name="Whitehead S."/>
            <person name="Woodward J.R."/>
            <person name="Volckaert G."/>
            <person name="Aert R."/>
            <person name="Robben J."/>
            <person name="Grymonprez B."/>
            <person name="Weltjens I."/>
            <person name="Vanstreels E."/>
            <person name="Rieger M."/>
            <person name="Schaefer M."/>
            <person name="Mueller-Auer S."/>
            <person name="Gabel C."/>
            <person name="Fuchs M."/>
            <person name="Duesterhoeft A."/>
            <person name="Fritzc C."/>
            <person name="Holzer E."/>
            <person name="Moestl D."/>
            <person name="Hilbert H."/>
            <person name="Borzym K."/>
            <person name="Langer I."/>
            <person name="Beck A."/>
            <person name="Lehrach H."/>
            <person name="Reinhardt R."/>
            <person name="Pohl T.M."/>
            <person name="Eger P."/>
            <person name="Zimmermann W."/>
            <person name="Wedler H."/>
            <person name="Wambutt R."/>
            <person name="Purnelle B."/>
            <person name="Goffeau A."/>
            <person name="Cadieu E."/>
            <person name="Dreano S."/>
            <person name="Gloux S."/>
            <person name="Lelaure V."/>
            <person name="Mottier S."/>
            <person name="Galibert F."/>
            <person name="Aves S.J."/>
            <person name="Xiang Z."/>
            <person name="Hunt C."/>
            <person name="Moore K."/>
            <person name="Hurst S.M."/>
            <person name="Lucas M."/>
            <person name="Rochet M."/>
            <person name="Gaillardin C."/>
            <person name="Tallada V.A."/>
            <person name="Garzon A."/>
            <person name="Thode G."/>
            <person name="Daga R.R."/>
            <person name="Cruzado L."/>
            <person name="Jimenez J."/>
            <person name="Sanchez M."/>
            <person name="del Rey F."/>
            <person name="Benito J."/>
            <person name="Dominguez A."/>
            <person name="Revuelta J.L."/>
            <person name="Moreno S."/>
            <person name="Armstrong J."/>
            <person name="Forsburg S.L."/>
            <person name="Cerutti L."/>
            <person name="Lowe T."/>
            <person name="McCombie W.R."/>
            <person name="Paulsen I."/>
            <person name="Potashkin J."/>
            <person name="Shpakovski G.V."/>
            <person name="Ussery D."/>
            <person name="Barrell B.G."/>
            <person name="Nurse P."/>
        </authorList>
    </citation>
    <scope>NUCLEOTIDE SEQUENCE [LARGE SCALE GENOMIC DNA]</scope>
    <source>
        <strain>972 / ATCC 24843</strain>
    </source>
</reference>
<reference key="3">
    <citation type="journal article" date="2005" name="J. Biol. Chem.">
        <title>Specificity and mechanism of RNA cap guanine-N2 methyltransferase (Tgs1).</title>
        <authorList>
            <person name="Hausmann S."/>
            <person name="Shuman S."/>
        </authorList>
    </citation>
    <scope>FUNCTION</scope>
    <scope>CATALYTIC ACTIVITY</scope>
    <scope>BIOPHYSICOCHEMICAL PROPERTIES</scope>
    <scope>SUBUNIT</scope>
</reference>
<reference key="4">
    <citation type="journal article" date="2024" name="Nucleic Acids Res.">
        <title>The fission yeast ortholog of Coilin, Mug174, forms Cajal body-like nuclear condensates and is essential for cellular quiescence.</title>
        <authorList>
            <person name="Deng X."/>
            <person name="Yao Q."/>
            <person name="Horvath A."/>
            <person name="Jiang Z."/>
            <person name="Zhao J."/>
            <person name="Fischer T."/>
            <person name="Sugiyama T."/>
        </authorList>
    </citation>
    <scope>INTERACTION WITH MUG174</scope>
    <scope>SUBCELLULAR LOCATION</scope>
    <scope>DISRUPTION PHENOTYPE</scope>
</reference>
<keyword id="KW-0489">Methyltransferase</keyword>
<keyword id="KW-0539">Nucleus</keyword>
<keyword id="KW-1185">Reference proteome</keyword>
<keyword id="KW-0949">S-adenosyl-L-methionine</keyword>
<keyword id="KW-0808">Transferase</keyword>
<proteinExistence type="evidence at protein level"/>
<gene>
    <name type="primary">tgs1</name>
    <name type="ORF">SPAC2G11.15c</name>
    <name type="ORF">SPAC521.01c</name>
</gene>
<accession>Q09814</accession>
<accession>P78826</accession>
<accession>Q9P7B6</accession>
<dbReference type="EC" id="2.1.1.-" evidence="1"/>
<dbReference type="EMBL" id="D89174">
    <property type="protein sequence ID" value="BAA13836.1"/>
    <property type="molecule type" value="mRNA"/>
</dbReference>
<dbReference type="EMBL" id="CU329670">
    <property type="protein sequence ID" value="CAA91180.2"/>
    <property type="molecule type" value="Genomic_DNA"/>
</dbReference>
<dbReference type="PIR" id="T38581">
    <property type="entry name" value="T38581"/>
</dbReference>
<dbReference type="PIR" id="T42539">
    <property type="entry name" value="T42539"/>
</dbReference>
<dbReference type="RefSeq" id="NP_593095.3">
    <property type="nucleotide sequence ID" value="NM_001018493.3"/>
</dbReference>
<dbReference type="SMR" id="Q09814"/>
<dbReference type="BioGRID" id="278498">
    <property type="interactions" value="6"/>
</dbReference>
<dbReference type="FunCoup" id="Q09814">
    <property type="interactions" value="356"/>
</dbReference>
<dbReference type="IntAct" id="Q09814">
    <property type="interactions" value="1"/>
</dbReference>
<dbReference type="STRING" id="284812.Q09814"/>
<dbReference type="iPTMnet" id="Q09814"/>
<dbReference type="PaxDb" id="4896-SPAC2G11-15c-1"/>
<dbReference type="EnsemblFungi" id="SPAC2G11.15c.1">
    <property type="protein sequence ID" value="SPAC2G11.15c.1:pep"/>
    <property type="gene ID" value="SPAC2G11.15c"/>
</dbReference>
<dbReference type="GeneID" id="2542015"/>
<dbReference type="KEGG" id="spo:2542015"/>
<dbReference type="PomBase" id="SPAC2G11.15c">
    <property type="gene designation" value="tgs1"/>
</dbReference>
<dbReference type="VEuPathDB" id="FungiDB:SPAC2G11.15c"/>
<dbReference type="eggNOG" id="KOG2730">
    <property type="taxonomic scope" value="Eukaryota"/>
</dbReference>
<dbReference type="HOGENOM" id="CLU_029658_0_1_1"/>
<dbReference type="InParanoid" id="Q09814"/>
<dbReference type="OMA" id="KALCIYY"/>
<dbReference type="PhylomeDB" id="Q09814"/>
<dbReference type="PRO" id="PR:Q09814"/>
<dbReference type="Proteomes" id="UP000002485">
    <property type="component" value="Chromosome I"/>
</dbReference>
<dbReference type="GO" id="GO:0015030">
    <property type="term" value="C:Cajal body"/>
    <property type="evidence" value="ECO:0000314"/>
    <property type="project" value="UniProtKB"/>
</dbReference>
<dbReference type="GO" id="GO:0005737">
    <property type="term" value="C:cytoplasm"/>
    <property type="evidence" value="ECO:0007005"/>
    <property type="project" value="PomBase"/>
</dbReference>
<dbReference type="GO" id="GO:0005829">
    <property type="term" value="C:cytosol"/>
    <property type="evidence" value="ECO:0007005"/>
    <property type="project" value="PomBase"/>
</dbReference>
<dbReference type="GO" id="GO:0072686">
    <property type="term" value="C:mitotic spindle"/>
    <property type="evidence" value="ECO:0007005"/>
    <property type="project" value="PomBase"/>
</dbReference>
<dbReference type="GO" id="GO:0005730">
    <property type="term" value="C:nucleolus"/>
    <property type="evidence" value="ECO:0000266"/>
    <property type="project" value="PomBase"/>
</dbReference>
<dbReference type="GO" id="GO:0005634">
    <property type="term" value="C:nucleus"/>
    <property type="evidence" value="ECO:0007005"/>
    <property type="project" value="PomBase"/>
</dbReference>
<dbReference type="GO" id="GO:0071164">
    <property type="term" value="F:RNA cap trimethylguanosine synthase activity"/>
    <property type="evidence" value="ECO:0000314"/>
    <property type="project" value="PomBase"/>
</dbReference>
<dbReference type="GO" id="GO:0036261">
    <property type="term" value="P:7-methylguanosine cap hypermethylation"/>
    <property type="evidence" value="ECO:0000315"/>
    <property type="project" value="PomBase"/>
</dbReference>
<dbReference type="CDD" id="cd02440">
    <property type="entry name" value="AdoMet_MTases"/>
    <property type="match status" value="1"/>
</dbReference>
<dbReference type="FunFam" id="3.40.50.150:FF:000270">
    <property type="entry name" value="RNA methylase family protein"/>
    <property type="match status" value="1"/>
</dbReference>
<dbReference type="Gene3D" id="3.40.50.150">
    <property type="entry name" value="Vaccinia Virus protein VP39"/>
    <property type="match status" value="1"/>
</dbReference>
<dbReference type="InterPro" id="IPR019012">
    <property type="entry name" value="RNA_cap_Gua-N2-MeTrfase"/>
</dbReference>
<dbReference type="InterPro" id="IPR029063">
    <property type="entry name" value="SAM-dependent_MTases_sf"/>
</dbReference>
<dbReference type="PANTHER" id="PTHR14741">
    <property type="entry name" value="S-ADENOSYLMETHIONINE-DEPENDENT METHYLTRANSFERASE RELATED"/>
    <property type="match status" value="1"/>
</dbReference>
<dbReference type="PANTHER" id="PTHR14741:SF32">
    <property type="entry name" value="TRIMETHYLGUANOSINE SYNTHASE"/>
    <property type="match status" value="1"/>
</dbReference>
<dbReference type="Pfam" id="PF09445">
    <property type="entry name" value="Methyltransf_15"/>
    <property type="match status" value="1"/>
</dbReference>
<dbReference type="SUPFAM" id="SSF53335">
    <property type="entry name" value="S-adenosyl-L-methionine-dependent methyltransferases"/>
    <property type="match status" value="1"/>
</dbReference>
<protein>
    <recommendedName>
        <fullName>Trimethylguanosine synthase</fullName>
        <ecNumber evidence="1">2.1.1.-</ecNumber>
    </recommendedName>
    <alternativeName>
        <fullName>Cap-specific guanine-N(2) methyltransferase</fullName>
    </alternativeName>
    <alternativeName>
        <fullName>snRNA/snoRNA cap hypermethylase</fullName>
    </alternativeName>
</protein>
<feature type="chain" id="PRO_0000116412" description="Trimethylguanosine synthase">
    <location>
        <begin position="1"/>
        <end position="239"/>
    </location>
</feature>
<feature type="sequence conflict" description="In Ref. 1; BAA13836." evidence="3" ref="1">
    <original>P</original>
    <variation>A</variation>
    <location>
        <position position="193"/>
    </location>
</feature>
<organism>
    <name type="scientific">Schizosaccharomyces pombe (strain 972 / ATCC 24843)</name>
    <name type="common">Fission yeast</name>
    <dbReference type="NCBI Taxonomy" id="284812"/>
    <lineage>
        <taxon>Eukaryota</taxon>
        <taxon>Fungi</taxon>
        <taxon>Dikarya</taxon>
        <taxon>Ascomycota</taxon>
        <taxon>Taphrinomycotina</taxon>
        <taxon>Schizosaccharomycetes</taxon>
        <taxon>Schizosaccharomycetales</taxon>
        <taxon>Schizosaccharomycetaceae</taxon>
        <taxon>Schizosaccharomyces</taxon>
    </lineage>
</organism>
<name>TGS1_SCHPO</name>
<comment type="function">
    <text evidence="1">Catalyzes the two serial methylation steps for the conversion of the 7-monomethylguanosine (m(7)G) caps of snRNAs and snoRNAs to a 2,2,7-trimethylguanosine (m(2,2,7)G) cap structure. The enzyme is specific for guanine, and N7 methylation must precede N2 methylation. Required for pre-mRNA splicing, pre-rRNA processing and small ribosomal subunit synthesis. Involved in nucleolar structural organization.</text>
</comment>
<comment type="catalytic activity">
    <reaction evidence="1">
        <text>a 5'-end (N(7)-methyl 5'-triphosphoguanosine)-ribonucleoside in snRNA + S-adenosyl-L-methionine = a 5'-end (N(2),N(7)-dimethyl 5'-triphosphoguanosine)-ribonucleoside in snRNA + S-adenosyl-L-homocysteine + H(+)</text>
        <dbReference type="Rhea" id="RHEA:78471"/>
        <dbReference type="Rhea" id="RHEA-COMP:19085"/>
        <dbReference type="Rhea" id="RHEA-COMP:19087"/>
        <dbReference type="ChEBI" id="CHEBI:15378"/>
        <dbReference type="ChEBI" id="CHEBI:57856"/>
        <dbReference type="ChEBI" id="CHEBI:59789"/>
        <dbReference type="ChEBI" id="CHEBI:156461"/>
        <dbReference type="ChEBI" id="CHEBI:172880"/>
    </reaction>
    <physiologicalReaction direction="left-to-right" evidence="1">
        <dbReference type="Rhea" id="RHEA:78472"/>
    </physiologicalReaction>
</comment>
<comment type="catalytic activity">
    <reaction evidence="1">
        <text>a 5'-end (N(7)-methyl 5'-triphosphoguanosine)-ribonucleoside in snoRNA + S-adenosyl-L-methionine = a 5'-end (N(2),N(7)-dimethyl 5'-triphosphoguanosine)-ribonucleoside in snoRNA + S-adenosyl-L-homocysteine + H(+)</text>
        <dbReference type="Rhea" id="RHEA:78475"/>
        <dbReference type="Rhea" id="RHEA-COMP:19086"/>
        <dbReference type="Rhea" id="RHEA-COMP:19088"/>
        <dbReference type="ChEBI" id="CHEBI:15378"/>
        <dbReference type="ChEBI" id="CHEBI:57856"/>
        <dbReference type="ChEBI" id="CHEBI:59789"/>
        <dbReference type="ChEBI" id="CHEBI:156461"/>
        <dbReference type="ChEBI" id="CHEBI:172880"/>
    </reaction>
    <physiologicalReaction direction="left-to-right" evidence="1">
        <dbReference type="Rhea" id="RHEA:78476"/>
    </physiologicalReaction>
</comment>
<comment type="catalytic activity">
    <reaction evidence="1">
        <text>a 5'-end (N(2),N(7)-dimethyl 5'-triphosphoguanosine)-ribonucleoside in snRNA + S-adenosyl-L-methionine = a 5'-end (N(2),N(2),N(7)-trimethyl 5'-triphosphoguanosine)-ribonucleoside in snRNA + S-adenosyl-L-homocysteine + H(+)</text>
        <dbReference type="Rhea" id="RHEA:78479"/>
        <dbReference type="Rhea" id="RHEA-COMP:19087"/>
        <dbReference type="Rhea" id="RHEA-COMP:19089"/>
        <dbReference type="ChEBI" id="CHEBI:15378"/>
        <dbReference type="ChEBI" id="CHEBI:57856"/>
        <dbReference type="ChEBI" id="CHEBI:59789"/>
        <dbReference type="ChEBI" id="CHEBI:167623"/>
        <dbReference type="ChEBI" id="CHEBI:172880"/>
    </reaction>
    <physiologicalReaction direction="left-to-right" evidence="1">
        <dbReference type="Rhea" id="RHEA:78480"/>
    </physiologicalReaction>
</comment>
<comment type="catalytic activity">
    <reaction evidence="1">
        <text>a 5'-end (N(2),N(7)-dimethyl 5'-triphosphoguanosine)-ribonucleoside in snoRNA + S-adenosyl-L-methionine = a 5'-end (N(2),N(2),N(7)-trimethyl 5'-triphosphoguanosine)-ribonucleoside in snoRNA + S-adenosyl-L-homocysteine + H(+)</text>
        <dbReference type="Rhea" id="RHEA:78507"/>
        <dbReference type="Rhea" id="RHEA-COMP:19088"/>
        <dbReference type="Rhea" id="RHEA-COMP:19090"/>
        <dbReference type="ChEBI" id="CHEBI:15378"/>
        <dbReference type="ChEBI" id="CHEBI:57856"/>
        <dbReference type="ChEBI" id="CHEBI:59789"/>
        <dbReference type="ChEBI" id="CHEBI:167623"/>
        <dbReference type="ChEBI" id="CHEBI:172880"/>
    </reaction>
    <physiologicalReaction direction="left-to-right" evidence="1">
        <dbReference type="Rhea" id="RHEA:78508"/>
    </physiologicalReaction>
</comment>
<comment type="activity regulation">
    <text>Substrate inhibited by S-adenosyl-L-homocysteine.</text>
</comment>
<comment type="biophysicochemical properties">
    <kinetics>
        <KM evidence="1">0.57 mM for m(7)GDP</KM>
        <KM evidence="1">8 uM for S-adenosyl-L-methionine</KM>
    </kinetics>
    <phDependence>
        <text evidence="1">Optimum pH is 8.0.</text>
    </phDependence>
</comment>
<comment type="subunit">
    <text evidence="1 2">Monomer (PubMed:15590684). Interacts with mug174; both proteins are required to maintain Cajal body integrity (PubMed:38828770).</text>
</comment>
<comment type="subcellular location">
    <subcellularLocation>
        <location evidence="2">Nucleus</location>
        <location evidence="2">Cajal body</location>
    </subcellularLocation>
</comment>
<comment type="disruption phenotype">
    <text evidence="2">Abnormal exit from quiescence and abnormal Cajal body integrity.</text>
</comment>
<comment type="similarity">
    <text evidence="3">Belongs to the methyltransferase superfamily. Trimethylguanosine synthase family.</text>
</comment>
<evidence type="ECO:0000269" key="1">
    <source>
    </source>
</evidence>
<evidence type="ECO:0000269" key="2">
    <source>
    </source>
</evidence>
<evidence type="ECO:0000305" key="3"/>
<sequence>MNKNEELDEDELLKKCIICPPVPKALKKYWNNRYNLFSRFDEGIWLDYQSWYSVTPEKVAVAIAKSVVDFIQPELIIDAFSGCGGNTIQFAKYCPVISIEIDPIKIAMAKHNLEIYGIPSSRVTFIQGDVLDTFKSLQFAKDYRSLVFMSPPWGGPSYSGKTVYSLNDLNPYAFDVLFKEATRISPYVAAFLPRNTDVKELAAYGSIHNKPYITNFLFEGYAKAICCYFNMKGAIARKI</sequence>